<dbReference type="EMBL" id="CU928163">
    <property type="protein sequence ID" value="CAR14288.1"/>
    <property type="molecule type" value="Genomic_DNA"/>
</dbReference>
<dbReference type="RefSeq" id="WP_000342428.1">
    <property type="nucleotide sequence ID" value="NC_011751.1"/>
</dbReference>
<dbReference type="RefSeq" id="YP_002413808.1">
    <property type="nucleotide sequence ID" value="NC_011751.1"/>
</dbReference>
<dbReference type="SMR" id="B7N727"/>
<dbReference type="STRING" id="585056.ECUMN_3122"/>
<dbReference type="KEGG" id="eum:ECUMN_3122"/>
<dbReference type="PATRIC" id="fig|585056.7.peg.3302"/>
<dbReference type="HOGENOM" id="CLU_121866_0_0_6"/>
<dbReference type="Proteomes" id="UP000007097">
    <property type="component" value="Chromosome"/>
</dbReference>
<dbReference type="GO" id="GO:0009898">
    <property type="term" value="C:cytoplasmic side of plasma membrane"/>
    <property type="evidence" value="ECO:0007669"/>
    <property type="project" value="InterPro"/>
</dbReference>
<dbReference type="CDD" id="cd16323">
    <property type="entry name" value="Syd"/>
    <property type="match status" value="1"/>
</dbReference>
<dbReference type="FunFam" id="3.40.1580.20:FF:000001">
    <property type="entry name" value="Protein Syd"/>
    <property type="match status" value="1"/>
</dbReference>
<dbReference type="Gene3D" id="3.40.1580.20">
    <property type="entry name" value="Syd protein"/>
    <property type="match status" value="1"/>
</dbReference>
<dbReference type="HAMAP" id="MF_01104">
    <property type="entry name" value="Syd"/>
    <property type="match status" value="1"/>
</dbReference>
<dbReference type="InterPro" id="IPR009948">
    <property type="entry name" value="Syd"/>
</dbReference>
<dbReference type="InterPro" id="IPR038228">
    <property type="entry name" value="Syd_sf"/>
</dbReference>
<dbReference type="NCBIfam" id="NF003439">
    <property type="entry name" value="PRK04968.1"/>
    <property type="match status" value="1"/>
</dbReference>
<dbReference type="Pfam" id="PF07348">
    <property type="entry name" value="Syd"/>
    <property type="match status" value="1"/>
</dbReference>
<protein>
    <recommendedName>
        <fullName evidence="1">Protein Syd</fullName>
    </recommendedName>
</protein>
<gene>
    <name evidence="1" type="primary">syd</name>
    <name type="ordered locus">ECUMN_3122</name>
</gene>
<comment type="function">
    <text evidence="1">Interacts with the SecY protein in vivo. May bind preferentially to an uncomplexed state of SecY, thus functioning either as a chelating agent for excess SecY in the cell or as a regulatory factor that negatively controls the translocase function.</text>
</comment>
<comment type="subcellular location">
    <subcellularLocation>
        <location evidence="1">Cell inner membrane</location>
        <topology evidence="1">Peripheral membrane protein</topology>
        <orientation evidence="1">Cytoplasmic side</orientation>
    </subcellularLocation>
    <text evidence="1">Loosely associated with the cytoplasmic side of the inner membrane, probably via SecY.</text>
</comment>
<comment type="similarity">
    <text evidence="1">Belongs to the Syd family.</text>
</comment>
<feature type="chain" id="PRO_1000137029" description="Protein Syd">
    <location>
        <begin position="1"/>
        <end position="181"/>
    </location>
</feature>
<evidence type="ECO:0000255" key="1">
    <source>
        <dbReference type="HAMAP-Rule" id="MF_01104"/>
    </source>
</evidence>
<name>SYDP_ECOLU</name>
<proteinExistence type="inferred from homology"/>
<reference key="1">
    <citation type="journal article" date="2009" name="PLoS Genet.">
        <title>Organised genome dynamics in the Escherichia coli species results in highly diverse adaptive paths.</title>
        <authorList>
            <person name="Touchon M."/>
            <person name="Hoede C."/>
            <person name="Tenaillon O."/>
            <person name="Barbe V."/>
            <person name="Baeriswyl S."/>
            <person name="Bidet P."/>
            <person name="Bingen E."/>
            <person name="Bonacorsi S."/>
            <person name="Bouchier C."/>
            <person name="Bouvet O."/>
            <person name="Calteau A."/>
            <person name="Chiapello H."/>
            <person name="Clermont O."/>
            <person name="Cruveiller S."/>
            <person name="Danchin A."/>
            <person name="Diard M."/>
            <person name="Dossat C."/>
            <person name="Karoui M.E."/>
            <person name="Frapy E."/>
            <person name="Garry L."/>
            <person name="Ghigo J.M."/>
            <person name="Gilles A.M."/>
            <person name="Johnson J."/>
            <person name="Le Bouguenec C."/>
            <person name="Lescat M."/>
            <person name="Mangenot S."/>
            <person name="Martinez-Jehanne V."/>
            <person name="Matic I."/>
            <person name="Nassif X."/>
            <person name="Oztas S."/>
            <person name="Petit M.A."/>
            <person name="Pichon C."/>
            <person name="Rouy Z."/>
            <person name="Ruf C.S."/>
            <person name="Schneider D."/>
            <person name="Tourret J."/>
            <person name="Vacherie B."/>
            <person name="Vallenet D."/>
            <person name="Medigue C."/>
            <person name="Rocha E.P.C."/>
            <person name="Denamur E."/>
        </authorList>
    </citation>
    <scope>NUCLEOTIDE SEQUENCE [LARGE SCALE GENOMIC DNA]</scope>
    <source>
        <strain>UMN026 / ExPEC</strain>
    </source>
</reference>
<organism>
    <name type="scientific">Escherichia coli O17:K52:H18 (strain UMN026 / ExPEC)</name>
    <dbReference type="NCBI Taxonomy" id="585056"/>
    <lineage>
        <taxon>Bacteria</taxon>
        <taxon>Pseudomonadati</taxon>
        <taxon>Pseudomonadota</taxon>
        <taxon>Gammaproteobacteria</taxon>
        <taxon>Enterobacterales</taxon>
        <taxon>Enterobacteriaceae</taxon>
        <taxon>Escherichia</taxon>
    </lineage>
</organism>
<accession>B7N727</accession>
<keyword id="KW-0997">Cell inner membrane</keyword>
<keyword id="KW-1003">Cell membrane</keyword>
<keyword id="KW-0472">Membrane</keyword>
<sequence>MDDLTAQALKDFTARYCDAWHEEHKSWPLSEELYGVPSPCIISTTEDAVYWQPQPFTGEQNVNAVERAFDIVIQPTIHTFYTTQFAGDMHAQFGDIKLTLLQTWSEDDFRRVQENLIGHLVTQKRLKLPPTLFIATLEEELEVISVCNLSGEVCKETLGTRKRAHLASNLAEFLNQLKPLL</sequence>